<keyword id="KW-0963">Cytoplasm</keyword>
<keyword id="KW-0413">Isomerase</keyword>
<keyword id="KW-0479">Metal-binding</keyword>
<keyword id="KW-0496">Mitochondrion</keyword>
<keyword id="KW-0520">NAD</keyword>
<keyword id="KW-0521">NADP</keyword>
<keyword id="KW-0547">Nucleotide-binding</keyword>
<keyword id="KW-0630">Potassium</keyword>
<keyword id="KW-1185">Reference proteome</keyword>
<name>NNRE_NEUCR</name>
<protein>
    <recommendedName>
        <fullName evidence="1">NAD(P)H-hydrate epimerase</fullName>
        <ecNumber>5.1.99.6</ecNumber>
    </recommendedName>
    <alternativeName>
        <fullName evidence="1">NAD(P)HX epimerase</fullName>
    </alternativeName>
</protein>
<comment type="function">
    <text evidence="1">Catalyzes the epimerization of the S- and R-forms of NAD(P)HX, a damaged form of NAD(P)H that is a result of enzymatic or heat-dependent hydration. This is a prerequisite for the S-specific NAD(P)H-hydrate dehydratase to allow the repair of both epimers of NAD(P)HX.</text>
</comment>
<comment type="catalytic activity">
    <reaction>
        <text>(6R)-NADHX = (6S)-NADHX</text>
        <dbReference type="Rhea" id="RHEA:32215"/>
        <dbReference type="ChEBI" id="CHEBI:64074"/>
        <dbReference type="ChEBI" id="CHEBI:64075"/>
        <dbReference type="EC" id="5.1.99.6"/>
    </reaction>
</comment>
<comment type="catalytic activity">
    <reaction>
        <text>(6R)-NADPHX = (6S)-NADPHX</text>
        <dbReference type="Rhea" id="RHEA:32227"/>
        <dbReference type="ChEBI" id="CHEBI:64076"/>
        <dbReference type="ChEBI" id="CHEBI:64077"/>
        <dbReference type="EC" id="5.1.99.6"/>
    </reaction>
</comment>
<comment type="cofactor">
    <cofactor evidence="1">
        <name>K(+)</name>
        <dbReference type="ChEBI" id="CHEBI:29103"/>
    </cofactor>
    <text evidence="1">Binds 1 potassium ion per subunit.</text>
</comment>
<comment type="subcellular location">
    <subcellularLocation>
        <location evidence="1">Cytoplasm</location>
    </subcellularLocation>
    <subcellularLocation>
        <location evidence="1">Mitochondrion</location>
    </subcellularLocation>
</comment>
<comment type="similarity">
    <text evidence="1">Belongs to the NnrE/AIBP family.</text>
</comment>
<gene>
    <name type="ORF">NCU08070</name>
</gene>
<sequence length="236" mass="25735">MALKTLSAKAAAALDRELMSTGAFSIDQLMELAGLSVSQAVARVHPTKQGRRVLVAVGPGNNGGDGLVAARHLFHYGYQPAIYYPKRPKNDLYQRLVKQCEDLEIPFVDDFFAALESTDHVVDAIFGFSFSGEVREPFPAVINAMAETKVPVTSVDAPSSWDINEGPPKSGVGSNFHPNVLVSLTAPKPLVKYFKGRHFVGGRFVAPSIAKKYDFDVPKYEGIDQIVEITDNQVKI</sequence>
<accession>Q7SGL3</accession>
<feature type="chain" id="PRO_0000416336" description="NAD(P)H-hydrate epimerase">
    <location>
        <begin position="1"/>
        <end position="236"/>
    </location>
</feature>
<feature type="domain" description="YjeF N-terminal" evidence="1">
    <location>
        <begin position="11"/>
        <end position="217"/>
    </location>
</feature>
<feature type="binding site" evidence="1">
    <location>
        <begin position="61"/>
        <end position="65"/>
    </location>
    <ligand>
        <name>(6S)-NADPHX</name>
        <dbReference type="ChEBI" id="CHEBI:64076"/>
    </ligand>
</feature>
<feature type="binding site" evidence="1">
    <location>
        <position position="62"/>
    </location>
    <ligand>
        <name>K(+)</name>
        <dbReference type="ChEBI" id="CHEBI:29103"/>
    </ligand>
</feature>
<feature type="binding site" evidence="1">
    <location>
        <position position="123"/>
    </location>
    <ligand>
        <name>K(+)</name>
        <dbReference type="ChEBI" id="CHEBI:29103"/>
    </ligand>
</feature>
<feature type="binding site" evidence="1">
    <location>
        <begin position="127"/>
        <end position="133"/>
    </location>
    <ligand>
        <name>(6S)-NADPHX</name>
        <dbReference type="ChEBI" id="CHEBI:64076"/>
    </ligand>
</feature>
<feature type="binding site" evidence="1">
    <location>
        <position position="156"/>
    </location>
    <ligand>
        <name>(6S)-NADPHX</name>
        <dbReference type="ChEBI" id="CHEBI:64076"/>
    </ligand>
</feature>
<feature type="binding site" evidence="1">
    <location>
        <position position="159"/>
    </location>
    <ligand>
        <name>K(+)</name>
        <dbReference type="ChEBI" id="CHEBI:29103"/>
    </ligand>
</feature>
<reference key="1">
    <citation type="journal article" date="2003" name="Nature">
        <title>The genome sequence of the filamentous fungus Neurospora crassa.</title>
        <authorList>
            <person name="Galagan J.E."/>
            <person name="Calvo S.E."/>
            <person name="Borkovich K.A."/>
            <person name="Selker E.U."/>
            <person name="Read N.D."/>
            <person name="Jaffe D.B."/>
            <person name="FitzHugh W."/>
            <person name="Ma L.-J."/>
            <person name="Smirnov S."/>
            <person name="Purcell S."/>
            <person name="Rehman B."/>
            <person name="Elkins T."/>
            <person name="Engels R."/>
            <person name="Wang S."/>
            <person name="Nielsen C.B."/>
            <person name="Butler J."/>
            <person name="Endrizzi M."/>
            <person name="Qui D."/>
            <person name="Ianakiev P."/>
            <person name="Bell-Pedersen D."/>
            <person name="Nelson M.A."/>
            <person name="Werner-Washburne M."/>
            <person name="Selitrennikoff C.P."/>
            <person name="Kinsey J.A."/>
            <person name="Braun E.L."/>
            <person name="Zelter A."/>
            <person name="Schulte U."/>
            <person name="Kothe G.O."/>
            <person name="Jedd G."/>
            <person name="Mewes H.-W."/>
            <person name="Staben C."/>
            <person name="Marcotte E."/>
            <person name="Greenberg D."/>
            <person name="Roy A."/>
            <person name="Foley K."/>
            <person name="Naylor J."/>
            <person name="Stange-Thomann N."/>
            <person name="Barrett R."/>
            <person name="Gnerre S."/>
            <person name="Kamal M."/>
            <person name="Kamvysselis M."/>
            <person name="Mauceli E.W."/>
            <person name="Bielke C."/>
            <person name="Rudd S."/>
            <person name="Frishman D."/>
            <person name="Krystofova S."/>
            <person name="Rasmussen C."/>
            <person name="Metzenberg R.L."/>
            <person name="Perkins D.D."/>
            <person name="Kroken S."/>
            <person name="Cogoni C."/>
            <person name="Macino G."/>
            <person name="Catcheside D.E.A."/>
            <person name="Li W."/>
            <person name="Pratt R.J."/>
            <person name="Osmani S.A."/>
            <person name="DeSouza C.P.C."/>
            <person name="Glass N.L."/>
            <person name="Orbach M.J."/>
            <person name="Berglund J.A."/>
            <person name="Voelker R."/>
            <person name="Yarden O."/>
            <person name="Plamann M."/>
            <person name="Seiler S."/>
            <person name="Dunlap J.C."/>
            <person name="Radford A."/>
            <person name="Aramayo R."/>
            <person name="Natvig D.O."/>
            <person name="Alex L.A."/>
            <person name="Mannhaupt G."/>
            <person name="Ebbole D.J."/>
            <person name="Freitag M."/>
            <person name="Paulsen I."/>
            <person name="Sachs M.S."/>
            <person name="Lander E.S."/>
            <person name="Nusbaum C."/>
            <person name="Birren B.W."/>
        </authorList>
    </citation>
    <scope>NUCLEOTIDE SEQUENCE [LARGE SCALE GENOMIC DNA]</scope>
    <source>
        <strain>ATCC 24698 / 74-OR23-1A / CBS 708.71 / DSM 1257 / FGSC 987</strain>
    </source>
</reference>
<evidence type="ECO:0000255" key="1">
    <source>
        <dbReference type="HAMAP-Rule" id="MF_03159"/>
    </source>
</evidence>
<dbReference type="EC" id="5.1.99.6"/>
<dbReference type="EMBL" id="CM002236">
    <property type="protein sequence ID" value="EAA35965.1"/>
    <property type="molecule type" value="Genomic_DNA"/>
</dbReference>
<dbReference type="RefSeq" id="XP_965201.1">
    <property type="nucleotide sequence ID" value="XM_960108.2"/>
</dbReference>
<dbReference type="SMR" id="Q7SGL3"/>
<dbReference type="FunCoup" id="Q7SGL3">
    <property type="interactions" value="241"/>
</dbReference>
<dbReference type="STRING" id="367110.Q7SGL3"/>
<dbReference type="PaxDb" id="5141-EFNCRP00000008562"/>
<dbReference type="EnsemblFungi" id="EAA35965">
    <property type="protein sequence ID" value="EAA35965"/>
    <property type="gene ID" value="NCU08070"/>
</dbReference>
<dbReference type="GeneID" id="3881381"/>
<dbReference type="KEGG" id="ncr:NCU08070"/>
<dbReference type="VEuPathDB" id="FungiDB:NCU08070"/>
<dbReference type="HOGENOM" id="CLU_024853_3_0_1"/>
<dbReference type="InParanoid" id="Q7SGL3"/>
<dbReference type="OMA" id="RHLFHYG"/>
<dbReference type="OrthoDB" id="10064708at2759"/>
<dbReference type="Proteomes" id="UP000001805">
    <property type="component" value="Chromosome 1, Linkage Group I"/>
</dbReference>
<dbReference type="GO" id="GO:0005739">
    <property type="term" value="C:mitochondrion"/>
    <property type="evidence" value="ECO:0000318"/>
    <property type="project" value="GO_Central"/>
</dbReference>
<dbReference type="GO" id="GO:0046872">
    <property type="term" value="F:metal ion binding"/>
    <property type="evidence" value="ECO:0007669"/>
    <property type="project" value="UniProtKB-KW"/>
</dbReference>
<dbReference type="GO" id="GO:0052856">
    <property type="term" value="F:NAD(P)HX epimerase activity"/>
    <property type="evidence" value="ECO:0000318"/>
    <property type="project" value="GO_Central"/>
</dbReference>
<dbReference type="GO" id="GO:0000166">
    <property type="term" value="F:nucleotide binding"/>
    <property type="evidence" value="ECO:0007669"/>
    <property type="project" value="UniProtKB-KW"/>
</dbReference>
<dbReference type="FunFam" id="3.40.50.10260:FF:000005">
    <property type="entry name" value="NAD(P)H-hydrate epimerase"/>
    <property type="match status" value="1"/>
</dbReference>
<dbReference type="Gene3D" id="3.40.50.10260">
    <property type="entry name" value="YjeF N-terminal domain"/>
    <property type="match status" value="1"/>
</dbReference>
<dbReference type="HAMAP" id="MF_01966">
    <property type="entry name" value="NADHX_epimerase"/>
    <property type="match status" value="1"/>
</dbReference>
<dbReference type="InterPro" id="IPR004443">
    <property type="entry name" value="YjeF_N_dom"/>
</dbReference>
<dbReference type="InterPro" id="IPR036652">
    <property type="entry name" value="YjeF_N_dom_sf"/>
</dbReference>
<dbReference type="InterPro" id="IPR032976">
    <property type="entry name" value="YJEFN_prot_NAXE-like"/>
</dbReference>
<dbReference type="NCBIfam" id="TIGR00197">
    <property type="entry name" value="yjeF_nterm"/>
    <property type="match status" value="1"/>
</dbReference>
<dbReference type="PANTHER" id="PTHR13232">
    <property type="entry name" value="NAD(P)H-HYDRATE EPIMERASE"/>
    <property type="match status" value="1"/>
</dbReference>
<dbReference type="PANTHER" id="PTHR13232:SF10">
    <property type="entry name" value="NAD(P)H-HYDRATE EPIMERASE"/>
    <property type="match status" value="1"/>
</dbReference>
<dbReference type="Pfam" id="PF03853">
    <property type="entry name" value="YjeF_N"/>
    <property type="match status" value="1"/>
</dbReference>
<dbReference type="SUPFAM" id="SSF64153">
    <property type="entry name" value="YjeF N-terminal domain-like"/>
    <property type="match status" value="1"/>
</dbReference>
<dbReference type="PROSITE" id="PS51385">
    <property type="entry name" value="YJEF_N"/>
    <property type="match status" value="1"/>
</dbReference>
<organism>
    <name type="scientific">Neurospora crassa (strain ATCC 24698 / 74-OR23-1A / CBS 708.71 / DSM 1257 / FGSC 987)</name>
    <dbReference type="NCBI Taxonomy" id="367110"/>
    <lineage>
        <taxon>Eukaryota</taxon>
        <taxon>Fungi</taxon>
        <taxon>Dikarya</taxon>
        <taxon>Ascomycota</taxon>
        <taxon>Pezizomycotina</taxon>
        <taxon>Sordariomycetes</taxon>
        <taxon>Sordariomycetidae</taxon>
        <taxon>Sordariales</taxon>
        <taxon>Sordariaceae</taxon>
        <taxon>Neurospora</taxon>
    </lineage>
</organism>
<proteinExistence type="inferred from homology"/>